<accession>Q7VER1</accession>
<accession>A0A1R3Y055</accession>
<accession>X2BJN3</accession>
<organism>
    <name type="scientific">Mycobacterium bovis (strain ATCC BAA-935 / AF2122/97)</name>
    <dbReference type="NCBI Taxonomy" id="233413"/>
    <lineage>
        <taxon>Bacteria</taxon>
        <taxon>Bacillati</taxon>
        <taxon>Actinomycetota</taxon>
        <taxon>Actinomycetes</taxon>
        <taxon>Mycobacteriales</taxon>
        <taxon>Mycobacteriaceae</taxon>
        <taxon>Mycobacterium</taxon>
        <taxon>Mycobacterium tuberculosis complex</taxon>
    </lineage>
</organism>
<comment type="subcellular location">
    <subcellularLocation>
        <location evidence="3">Cell membrane</location>
        <topology evidence="3">Lipid-anchor</topology>
    </subcellularLocation>
</comment>
<dbReference type="EMBL" id="LT708304">
    <property type="protein sequence ID" value="SIU00713.1"/>
    <property type="molecule type" value="Genomic_DNA"/>
</dbReference>
<dbReference type="RefSeq" id="NP_855756.1">
    <property type="nucleotide sequence ID" value="NC_002945.3"/>
</dbReference>
<dbReference type="RefSeq" id="WP_003410707.1">
    <property type="nucleotide sequence ID" value="NC_002945.4"/>
</dbReference>
<dbReference type="KEGG" id="mbo:BQ2027_MB2106"/>
<dbReference type="PATRIC" id="fig|233413.5.peg.2316"/>
<dbReference type="Proteomes" id="UP000001419">
    <property type="component" value="Chromosome"/>
</dbReference>
<dbReference type="GO" id="GO:0005886">
    <property type="term" value="C:plasma membrane"/>
    <property type="evidence" value="ECO:0007669"/>
    <property type="project" value="UniProtKB-SubCell"/>
</dbReference>
<proteinExistence type="inferred from homology"/>
<protein>
    <recommendedName>
        <fullName>Putative lipoprotein LppJ</fullName>
    </recommendedName>
</protein>
<feature type="signal peptide" evidence="2">
    <location>
        <begin position="1"/>
        <end position="28"/>
    </location>
</feature>
<feature type="chain" id="PRO_0000018107" description="Putative lipoprotein LppJ">
    <location>
        <begin position="29"/>
        <end position="187"/>
    </location>
</feature>
<feature type="lipid moiety-binding region" description="N-palmitoyl cysteine" evidence="1">
    <location>
        <position position="29"/>
    </location>
</feature>
<feature type="lipid moiety-binding region" description="S-diacylglycerol cysteine" evidence="1">
    <location>
        <position position="29"/>
    </location>
</feature>
<reference key="1">
    <citation type="journal article" date="2003" name="Proc. Natl. Acad. Sci. U.S.A.">
        <title>The complete genome sequence of Mycobacterium bovis.</title>
        <authorList>
            <person name="Garnier T."/>
            <person name="Eiglmeier K."/>
            <person name="Camus J.-C."/>
            <person name="Medina N."/>
            <person name="Mansoor H."/>
            <person name="Pryor M."/>
            <person name="Duthoy S."/>
            <person name="Grondin S."/>
            <person name="Lacroix C."/>
            <person name="Monsempe C."/>
            <person name="Simon S."/>
            <person name="Harris B."/>
            <person name="Atkin R."/>
            <person name="Doggett J."/>
            <person name="Mayes R."/>
            <person name="Keating L."/>
            <person name="Wheeler P.R."/>
            <person name="Parkhill J."/>
            <person name="Barrell B.G."/>
            <person name="Cole S.T."/>
            <person name="Gordon S.V."/>
            <person name="Hewinson R.G."/>
        </authorList>
    </citation>
    <scope>NUCLEOTIDE SEQUENCE [LARGE SCALE GENOMIC DNA]</scope>
    <source>
        <strain>ATCC BAA-935 / AF2122/97</strain>
    </source>
</reference>
<reference key="2">
    <citation type="journal article" date="2017" name="Genome Announc.">
        <title>Updated reference genome sequence and annotation of Mycobacterium bovis AF2122/97.</title>
        <authorList>
            <person name="Malone K.M."/>
            <person name="Farrell D."/>
            <person name="Stuber T.P."/>
            <person name="Schubert O.T."/>
            <person name="Aebersold R."/>
            <person name="Robbe-Austerman S."/>
            <person name="Gordon S.V."/>
        </authorList>
    </citation>
    <scope>NUCLEOTIDE SEQUENCE [LARGE SCALE GENOMIC DNA]</scope>
    <scope>GENOME REANNOTATION</scope>
    <source>
        <strain>ATCC BAA-935 / AF2122/97</strain>
    </source>
</reference>
<keyword id="KW-1003">Cell membrane</keyword>
<keyword id="KW-0449">Lipoprotein</keyword>
<keyword id="KW-0472">Membrane</keyword>
<keyword id="KW-0564">Palmitate</keyword>
<keyword id="KW-1185">Reference proteome</keyword>
<keyword id="KW-0732">Signal</keyword>
<evidence type="ECO:0000250" key="1"/>
<evidence type="ECO:0000255" key="2"/>
<evidence type="ECO:0000305" key="3"/>
<sequence length="187" mass="20296">MPHSTADRRLRLTRQALLAAAVAPLLAGCALVMHKPHSAGSSNPWDDSAHPLTDDQAMAQVVEPAKQIVAAADLQAVRAGFSFTSCNDQGDPPYQGTVRMAFLLQGDHDAYFQHVRAAMLSHGWIDGPPPGQYFHGITLHKNGVTANMSLALDHSYGEMILDGECRNTTDHHHDDETTNITNQLVQP</sequence>
<name>LPPJ_MYCBO</name>
<gene>
    <name type="primary">lppJ</name>
    <name type="ordered locus">BQ2027_MB2106</name>
</gene>